<dbReference type="EMBL" id="FM242711">
    <property type="protein sequence ID" value="CAS06327.1"/>
    <property type="molecule type" value="Genomic_DNA"/>
</dbReference>
<dbReference type="RefSeq" id="WP_003723675.1">
    <property type="nucleotide sequence ID" value="NC_012488.1"/>
</dbReference>
<dbReference type="SMR" id="C1KZF4"/>
<dbReference type="GeneID" id="93240486"/>
<dbReference type="KEGG" id="lmc:Lm4b_02572"/>
<dbReference type="HOGENOM" id="CLU_074407_2_2_9"/>
<dbReference type="GO" id="GO:0022625">
    <property type="term" value="C:cytosolic large ribosomal subunit"/>
    <property type="evidence" value="ECO:0007669"/>
    <property type="project" value="TreeGrafter"/>
</dbReference>
<dbReference type="GO" id="GO:0003735">
    <property type="term" value="F:structural constituent of ribosome"/>
    <property type="evidence" value="ECO:0007669"/>
    <property type="project" value="InterPro"/>
</dbReference>
<dbReference type="GO" id="GO:0006412">
    <property type="term" value="P:translation"/>
    <property type="evidence" value="ECO:0007669"/>
    <property type="project" value="UniProtKB-UniRule"/>
</dbReference>
<dbReference type="FunFam" id="3.90.1030.10:FF:000002">
    <property type="entry name" value="50S ribosomal protein L17"/>
    <property type="match status" value="1"/>
</dbReference>
<dbReference type="Gene3D" id="3.90.1030.10">
    <property type="entry name" value="Ribosomal protein L17"/>
    <property type="match status" value="1"/>
</dbReference>
<dbReference type="HAMAP" id="MF_01368">
    <property type="entry name" value="Ribosomal_bL17"/>
    <property type="match status" value="1"/>
</dbReference>
<dbReference type="InterPro" id="IPR000456">
    <property type="entry name" value="Ribosomal_bL17"/>
</dbReference>
<dbReference type="InterPro" id="IPR047859">
    <property type="entry name" value="Ribosomal_bL17_CS"/>
</dbReference>
<dbReference type="InterPro" id="IPR036373">
    <property type="entry name" value="Ribosomal_bL17_sf"/>
</dbReference>
<dbReference type="NCBIfam" id="TIGR00059">
    <property type="entry name" value="L17"/>
    <property type="match status" value="1"/>
</dbReference>
<dbReference type="PANTHER" id="PTHR14413:SF16">
    <property type="entry name" value="LARGE RIBOSOMAL SUBUNIT PROTEIN BL17M"/>
    <property type="match status" value="1"/>
</dbReference>
<dbReference type="PANTHER" id="PTHR14413">
    <property type="entry name" value="RIBOSOMAL PROTEIN L17"/>
    <property type="match status" value="1"/>
</dbReference>
<dbReference type="Pfam" id="PF01196">
    <property type="entry name" value="Ribosomal_L17"/>
    <property type="match status" value="1"/>
</dbReference>
<dbReference type="SUPFAM" id="SSF64263">
    <property type="entry name" value="Prokaryotic ribosomal protein L17"/>
    <property type="match status" value="1"/>
</dbReference>
<dbReference type="PROSITE" id="PS01167">
    <property type="entry name" value="RIBOSOMAL_L17"/>
    <property type="match status" value="1"/>
</dbReference>
<sequence length="135" mass="15215">MGYRKLGRTSSQRKALLRDLATDLIVFERIETTEARAKEIRKVVEKLITSGKKGDLHARRQAAAFIRHEVVEVVQVDAKGKDGSTVKKNRPVYALQKLFDDVAPRYAERQGGYTRILKKGPRRGDGAPMVIIELV</sequence>
<comment type="subunit">
    <text evidence="1">Part of the 50S ribosomal subunit. Contacts protein L32.</text>
</comment>
<comment type="similarity">
    <text evidence="1">Belongs to the bacterial ribosomal protein bL17 family.</text>
</comment>
<protein>
    <recommendedName>
        <fullName evidence="1">Large ribosomal subunit protein bL17</fullName>
    </recommendedName>
    <alternativeName>
        <fullName evidence="2">50S ribosomal protein L17</fullName>
    </alternativeName>
</protein>
<reference key="1">
    <citation type="journal article" date="2012" name="BMC Genomics">
        <title>Comparative genomics and transcriptomics of lineages I, II, and III strains of Listeria monocytogenes.</title>
        <authorList>
            <person name="Hain T."/>
            <person name="Ghai R."/>
            <person name="Billion A."/>
            <person name="Kuenne C.T."/>
            <person name="Steinweg C."/>
            <person name="Izar B."/>
            <person name="Mohamed W."/>
            <person name="Mraheil M."/>
            <person name="Domann E."/>
            <person name="Schaffrath S."/>
            <person name="Karst U."/>
            <person name="Goesmann A."/>
            <person name="Oehm S."/>
            <person name="Puhler A."/>
            <person name="Merkl R."/>
            <person name="Vorwerk S."/>
            <person name="Glaser P."/>
            <person name="Garrido P."/>
            <person name="Rusniok C."/>
            <person name="Buchrieser C."/>
            <person name="Goebel W."/>
            <person name="Chakraborty T."/>
        </authorList>
    </citation>
    <scope>NUCLEOTIDE SEQUENCE [LARGE SCALE GENOMIC DNA]</scope>
    <source>
        <strain>CLIP80459</strain>
    </source>
</reference>
<feature type="chain" id="PRO_1000215013" description="Large ribosomal subunit protein bL17">
    <location>
        <begin position="1"/>
        <end position="135"/>
    </location>
</feature>
<keyword id="KW-0687">Ribonucleoprotein</keyword>
<keyword id="KW-0689">Ribosomal protein</keyword>
<accession>C1KZF4</accession>
<evidence type="ECO:0000255" key="1">
    <source>
        <dbReference type="HAMAP-Rule" id="MF_01368"/>
    </source>
</evidence>
<evidence type="ECO:0000305" key="2"/>
<gene>
    <name evidence="1" type="primary">rplQ</name>
    <name type="ordered locus">Lm4b_02572</name>
</gene>
<name>RL17_LISMC</name>
<proteinExistence type="inferred from homology"/>
<organism>
    <name type="scientific">Listeria monocytogenes serotype 4b (strain CLIP80459)</name>
    <dbReference type="NCBI Taxonomy" id="568819"/>
    <lineage>
        <taxon>Bacteria</taxon>
        <taxon>Bacillati</taxon>
        <taxon>Bacillota</taxon>
        <taxon>Bacilli</taxon>
        <taxon>Bacillales</taxon>
        <taxon>Listeriaceae</taxon>
        <taxon>Listeria</taxon>
    </lineage>
</organism>